<proteinExistence type="evidence at protein level"/>
<sequence length="574" mass="61827">MLREFSKWGVEASPGKAWERKRSLLRGAVGRYRGATGGDLFWAPFPSWGTMEFPEHSQQLLQSLREQRSQGFLCDCTVMVGSTQFLAHRAVLASCSPFFQLFYKERELDKRDLVCIHNEIVTAPAFGLLLDFMYAGQLTLRGDTPVEDVLAAASYLHMNDIVKVCKRRLQARALAEADSTKKEEETNSQLPSLEFLSSTSRGTQPSLASAETSGHWGKGEWKGSAAPSPTVRPPDEPPMSSGADTTQPGMEVDAPHLRAPHPPVADVSLASPSSSTETIPTNYFSSGISAVSLEPLPSLDVGPESLRVVEPKDPGGPLQGFYPPASAPTSAPAPVSAPVPSQAPAPAEAELVQVKVEAIVISDEETDVSDEQPQGPERAFPSGGAVYGAQPSQPEAFEDPGAAGLEEVGPSDHFLPTDPHLPYHLLPGAGQYHRGLVTSPLPAPASLHEPLYLSSEYEAAPGSFGVFTEDVPTCKTCGKTFSCSYTLRRHATVHTRERPYECRYCLRSYTQSGDLYRHIRKAHNEDLAKRSKPDPEVGPLLGVQPLPGSPTADRQSSSGGGPPKDFVLAPKTNI</sequence>
<protein>
    <recommendedName>
        <fullName>Zinc finger and BTB domain-containing protein 3</fullName>
    </recommendedName>
</protein>
<comment type="function">
    <text>May be involved in transcriptional regulation.</text>
</comment>
<comment type="interaction">
    <interactant intactId="EBI-7229473">
        <id>Q9H5J0</id>
    </interactant>
    <interactant intactId="EBI-541426">
        <id>Q9BXS5</id>
        <label>AP1M1</label>
    </interactant>
    <organismsDiffer>false</organismsDiffer>
    <experiments>3</experiments>
</comment>
<comment type="interaction">
    <interactant intactId="EBI-7229473">
        <id>Q9H5J0</id>
    </interactant>
    <interactant intactId="EBI-7950783">
        <id>Q96JP2</id>
        <label>MYO15B</label>
    </interactant>
    <organismsDiffer>false</organismsDiffer>
    <experiments>3</experiments>
</comment>
<comment type="interaction">
    <interactant intactId="EBI-7229473">
        <id>Q9H5J0</id>
    </interactant>
    <interactant intactId="EBI-8463848">
        <id>Q8NB12</id>
        <label>SMYD1</label>
    </interactant>
    <organismsDiffer>false</organismsDiffer>
    <experiments>3</experiments>
</comment>
<comment type="subcellular location">
    <subcellularLocation>
        <location evidence="5">Nucleus</location>
    </subcellularLocation>
</comment>
<feature type="chain" id="PRO_0000047710" description="Zinc finger and BTB domain-containing protein 3">
    <location>
        <begin position="1"/>
        <end position="574"/>
    </location>
</feature>
<feature type="domain" description="BTB" evidence="1">
    <location>
        <begin position="74"/>
        <end position="142"/>
    </location>
</feature>
<feature type="zinc finger region" description="C2H2-type 1" evidence="2">
    <location>
        <begin position="472"/>
        <end position="494"/>
    </location>
</feature>
<feature type="zinc finger region" description="C2H2-type 2" evidence="2">
    <location>
        <begin position="500"/>
        <end position="523"/>
    </location>
</feature>
<feature type="region of interest" description="Disordered" evidence="3">
    <location>
        <begin position="175"/>
        <end position="277"/>
    </location>
</feature>
<feature type="region of interest" description="Disordered" evidence="3">
    <location>
        <begin position="305"/>
        <end position="346"/>
    </location>
</feature>
<feature type="region of interest" description="Disordered" evidence="3">
    <location>
        <begin position="364"/>
        <end position="403"/>
    </location>
</feature>
<feature type="region of interest" description="Disordered" evidence="3">
    <location>
        <begin position="526"/>
        <end position="574"/>
    </location>
</feature>
<feature type="compositionally biased region" description="Polar residues" evidence="3">
    <location>
        <begin position="187"/>
        <end position="212"/>
    </location>
</feature>
<feature type="compositionally biased region" description="Low complexity" evidence="3">
    <location>
        <begin position="323"/>
        <end position="334"/>
    </location>
</feature>
<feature type="compositionally biased region" description="Basic and acidic residues" evidence="3">
    <location>
        <begin position="526"/>
        <end position="535"/>
    </location>
</feature>
<feature type="modified residue" description="Phosphoserine" evidence="6 7 9">
    <location>
        <position position="362"/>
    </location>
</feature>
<feature type="modified residue" description="Phosphoserine" evidence="8">
    <location>
        <position position="549"/>
    </location>
</feature>
<feature type="cross-link" description="Glycyl lysine isopeptide (Lys-Gly) (interchain with G-Cter in SUMO2)" evidence="10">
    <location>
        <position position="181"/>
    </location>
</feature>
<feature type="cross-link" description="Glycyl lysine isopeptide (Lys-Gly) (interchain with G-Cter in SUMO2)" evidence="10">
    <location>
        <position position="182"/>
    </location>
</feature>
<feature type="cross-link" description="Glycyl lysine isopeptide (Lys-Gly) (interchain with G-Cter in SUMO2)" evidence="10">
    <location>
        <position position="532"/>
    </location>
</feature>
<feature type="sequence variant" id="VAR_035600" description="In a breast cancer sample; somatic mutation." evidence="4">
    <original>H</original>
    <variation>L</variation>
    <location>
        <position position="424"/>
    </location>
</feature>
<feature type="sequence variant" id="VAR_035601" description="In a breast cancer sample; somatic mutation." evidence="4">
    <original>S</original>
    <variation>F</variation>
    <location>
        <position position="455"/>
    </location>
</feature>
<feature type="sequence variant" id="VAR_018382" description="In dbSNP:rs544641.">
    <original>I</original>
    <variation>M</variation>
    <location>
        <position position="574"/>
    </location>
</feature>
<evidence type="ECO:0000255" key="1">
    <source>
        <dbReference type="PROSITE-ProRule" id="PRU00037"/>
    </source>
</evidence>
<evidence type="ECO:0000255" key="2">
    <source>
        <dbReference type="PROSITE-ProRule" id="PRU00042"/>
    </source>
</evidence>
<evidence type="ECO:0000256" key="3">
    <source>
        <dbReference type="SAM" id="MobiDB-lite"/>
    </source>
</evidence>
<evidence type="ECO:0000269" key="4">
    <source>
    </source>
</evidence>
<evidence type="ECO:0000305" key="5"/>
<evidence type="ECO:0007744" key="6">
    <source>
    </source>
</evidence>
<evidence type="ECO:0007744" key="7">
    <source>
    </source>
</evidence>
<evidence type="ECO:0007744" key="8">
    <source>
    </source>
</evidence>
<evidence type="ECO:0007744" key="9">
    <source>
    </source>
</evidence>
<evidence type="ECO:0007744" key="10">
    <source>
    </source>
</evidence>
<reference key="1">
    <citation type="journal article" date="2004" name="Nat. Genet.">
        <title>Complete sequencing and characterization of 21,243 full-length human cDNAs.</title>
        <authorList>
            <person name="Ota T."/>
            <person name="Suzuki Y."/>
            <person name="Nishikawa T."/>
            <person name="Otsuki T."/>
            <person name="Sugiyama T."/>
            <person name="Irie R."/>
            <person name="Wakamatsu A."/>
            <person name="Hayashi K."/>
            <person name="Sato H."/>
            <person name="Nagai K."/>
            <person name="Kimura K."/>
            <person name="Makita H."/>
            <person name="Sekine M."/>
            <person name="Obayashi M."/>
            <person name="Nishi T."/>
            <person name="Shibahara T."/>
            <person name="Tanaka T."/>
            <person name="Ishii S."/>
            <person name="Yamamoto J."/>
            <person name="Saito K."/>
            <person name="Kawai Y."/>
            <person name="Isono Y."/>
            <person name="Nakamura Y."/>
            <person name="Nagahari K."/>
            <person name="Murakami K."/>
            <person name="Yasuda T."/>
            <person name="Iwayanagi T."/>
            <person name="Wagatsuma M."/>
            <person name="Shiratori A."/>
            <person name="Sudo H."/>
            <person name="Hosoiri T."/>
            <person name="Kaku Y."/>
            <person name="Kodaira H."/>
            <person name="Kondo H."/>
            <person name="Sugawara M."/>
            <person name="Takahashi M."/>
            <person name="Kanda K."/>
            <person name="Yokoi T."/>
            <person name="Furuya T."/>
            <person name="Kikkawa E."/>
            <person name="Omura Y."/>
            <person name="Abe K."/>
            <person name="Kamihara K."/>
            <person name="Katsuta N."/>
            <person name="Sato K."/>
            <person name="Tanikawa M."/>
            <person name="Yamazaki M."/>
            <person name="Ninomiya K."/>
            <person name="Ishibashi T."/>
            <person name="Yamashita H."/>
            <person name="Murakawa K."/>
            <person name="Fujimori K."/>
            <person name="Tanai H."/>
            <person name="Kimata M."/>
            <person name="Watanabe M."/>
            <person name="Hiraoka S."/>
            <person name="Chiba Y."/>
            <person name="Ishida S."/>
            <person name="Ono Y."/>
            <person name="Takiguchi S."/>
            <person name="Watanabe S."/>
            <person name="Yosida M."/>
            <person name="Hotuta T."/>
            <person name="Kusano J."/>
            <person name="Kanehori K."/>
            <person name="Takahashi-Fujii A."/>
            <person name="Hara H."/>
            <person name="Tanase T.-O."/>
            <person name="Nomura Y."/>
            <person name="Togiya S."/>
            <person name="Komai F."/>
            <person name="Hara R."/>
            <person name="Takeuchi K."/>
            <person name="Arita M."/>
            <person name="Imose N."/>
            <person name="Musashino K."/>
            <person name="Yuuki H."/>
            <person name="Oshima A."/>
            <person name="Sasaki N."/>
            <person name="Aotsuka S."/>
            <person name="Yoshikawa Y."/>
            <person name="Matsunawa H."/>
            <person name="Ichihara T."/>
            <person name="Shiohata N."/>
            <person name="Sano S."/>
            <person name="Moriya S."/>
            <person name="Momiyama H."/>
            <person name="Satoh N."/>
            <person name="Takami S."/>
            <person name="Terashima Y."/>
            <person name="Suzuki O."/>
            <person name="Nakagawa S."/>
            <person name="Senoh A."/>
            <person name="Mizoguchi H."/>
            <person name="Goto Y."/>
            <person name="Shimizu F."/>
            <person name="Wakebe H."/>
            <person name="Hishigaki H."/>
            <person name="Watanabe T."/>
            <person name="Sugiyama A."/>
            <person name="Takemoto M."/>
            <person name="Kawakami B."/>
            <person name="Yamazaki M."/>
            <person name="Watanabe K."/>
            <person name="Kumagai A."/>
            <person name="Itakura S."/>
            <person name="Fukuzumi Y."/>
            <person name="Fujimori Y."/>
            <person name="Komiyama M."/>
            <person name="Tashiro H."/>
            <person name="Tanigami A."/>
            <person name="Fujiwara T."/>
            <person name="Ono T."/>
            <person name="Yamada K."/>
            <person name="Fujii Y."/>
            <person name="Ozaki K."/>
            <person name="Hirao M."/>
            <person name="Ohmori Y."/>
            <person name="Kawabata A."/>
            <person name="Hikiji T."/>
            <person name="Kobatake N."/>
            <person name="Inagaki H."/>
            <person name="Ikema Y."/>
            <person name="Okamoto S."/>
            <person name="Okitani R."/>
            <person name="Kawakami T."/>
            <person name="Noguchi S."/>
            <person name="Itoh T."/>
            <person name="Shigeta K."/>
            <person name="Senba T."/>
            <person name="Matsumura K."/>
            <person name="Nakajima Y."/>
            <person name="Mizuno T."/>
            <person name="Morinaga M."/>
            <person name="Sasaki M."/>
            <person name="Togashi T."/>
            <person name="Oyama M."/>
            <person name="Hata H."/>
            <person name="Watanabe M."/>
            <person name="Komatsu T."/>
            <person name="Mizushima-Sugano J."/>
            <person name="Satoh T."/>
            <person name="Shirai Y."/>
            <person name="Takahashi Y."/>
            <person name="Nakagawa K."/>
            <person name="Okumura K."/>
            <person name="Nagase T."/>
            <person name="Nomura N."/>
            <person name="Kikuchi H."/>
            <person name="Masuho Y."/>
            <person name="Yamashita R."/>
            <person name="Nakai K."/>
            <person name="Yada T."/>
            <person name="Nakamura Y."/>
            <person name="Ohara O."/>
            <person name="Isogai T."/>
            <person name="Sugano S."/>
        </authorList>
    </citation>
    <scope>NUCLEOTIDE SEQUENCE [LARGE SCALE MRNA]</scope>
</reference>
<reference key="2">
    <citation type="journal article" date="2004" name="Genome Res.">
        <title>The status, quality, and expansion of the NIH full-length cDNA project: the Mammalian Gene Collection (MGC).</title>
        <authorList>
            <consortium name="The MGC Project Team"/>
        </authorList>
    </citation>
    <scope>NUCLEOTIDE SEQUENCE [LARGE SCALE MRNA]</scope>
    <source>
        <tissue>Skin</tissue>
    </source>
</reference>
<reference key="3">
    <citation type="journal article" date="2008" name="Proc. Natl. Acad. Sci. U.S.A.">
        <title>A quantitative atlas of mitotic phosphorylation.</title>
        <authorList>
            <person name="Dephoure N."/>
            <person name="Zhou C."/>
            <person name="Villen J."/>
            <person name="Beausoleil S.A."/>
            <person name="Bakalarski C.E."/>
            <person name="Elledge S.J."/>
            <person name="Gygi S.P."/>
        </authorList>
    </citation>
    <scope>IDENTIFICATION BY MASS SPECTROMETRY [LARGE SCALE ANALYSIS]</scope>
    <source>
        <tissue>Cervix carcinoma</tissue>
    </source>
</reference>
<reference key="4">
    <citation type="journal article" date="2009" name="Sci. Signal.">
        <title>Quantitative phosphoproteomic analysis of T cell receptor signaling reveals system-wide modulation of protein-protein interactions.</title>
        <authorList>
            <person name="Mayya V."/>
            <person name="Lundgren D.H."/>
            <person name="Hwang S.-I."/>
            <person name="Rezaul K."/>
            <person name="Wu L."/>
            <person name="Eng J.K."/>
            <person name="Rodionov V."/>
            <person name="Han D.K."/>
        </authorList>
    </citation>
    <scope>PHOSPHORYLATION [LARGE SCALE ANALYSIS] AT SER-362</scope>
    <scope>IDENTIFICATION BY MASS SPECTROMETRY [LARGE SCALE ANALYSIS]</scope>
    <source>
        <tissue>Leukemic T-cell</tissue>
    </source>
</reference>
<reference key="5">
    <citation type="journal article" date="2011" name="Sci. Signal.">
        <title>System-wide temporal characterization of the proteome and phosphoproteome of human embryonic stem cell differentiation.</title>
        <authorList>
            <person name="Rigbolt K.T."/>
            <person name="Prokhorova T.A."/>
            <person name="Akimov V."/>
            <person name="Henningsen J."/>
            <person name="Johansen P.T."/>
            <person name="Kratchmarova I."/>
            <person name="Kassem M."/>
            <person name="Mann M."/>
            <person name="Olsen J.V."/>
            <person name="Blagoev B."/>
        </authorList>
    </citation>
    <scope>PHOSPHORYLATION [LARGE SCALE ANALYSIS] AT SER-362</scope>
    <scope>IDENTIFICATION BY MASS SPECTROMETRY [LARGE SCALE ANALYSIS]</scope>
</reference>
<reference key="6">
    <citation type="journal article" date="2013" name="J. Proteome Res.">
        <title>Toward a comprehensive characterization of a human cancer cell phosphoproteome.</title>
        <authorList>
            <person name="Zhou H."/>
            <person name="Di Palma S."/>
            <person name="Preisinger C."/>
            <person name="Peng M."/>
            <person name="Polat A.N."/>
            <person name="Heck A.J."/>
            <person name="Mohammed S."/>
        </authorList>
    </citation>
    <scope>PHOSPHORYLATION [LARGE SCALE ANALYSIS] AT SER-549</scope>
    <scope>IDENTIFICATION BY MASS SPECTROMETRY [LARGE SCALE ANALYSIS]</scope>
    <source>
        <tissue>Cervix carcinoma</tissue>
        <tissue>Erythroleukemia</tissue>
    </source>
</reference>
<reference key="7">
    <citation type="journal article" date="2014" name="J. Proteomics">
        <title>An enzyme assisted RP-RPLC approach for in-depth analysis of human liver phosphoproteome.</title>
        <authorList>
            <person name="Bian Y."/>
            <person name="Song C."/>
            <person name="Cheng K."/>
            <person name="Dong M."/>
            <person name="Wang F."/>
            <person name="Huang J."/>
            <person name="Sun D."/>
            <person name="Wang L."/>
            <person name="Ye M."/>
            <person name="Zou H."/>
        </authorList>
    </citation>
    <scope>PHOSPHORYLATION [LARGE SCALE ANALYSIS] AT SER-362</scope>
    <scope>IDENTIFICATION BY MASS SPECTROMETRY [LARGE SCALE ANALYSIS]</scope>
    <source>
        <tissue>Liver</tissue>
    </source>
</reference>
<reference key="8">
    <citation type="journal article" date="2017" name="Nat. Struct. Mol. Biol.">
        <title>Site-specific mapping of the human SUMO proteome reveals co-modification with phosphorylation.</title>
        <authorList>
            <person name="Hendriks I.A."/>
            <person name="Lyon D."/>
            <person name="Young C."/>
            <person name="Jensen L.J."/>
            <person name="Vertegaal A.C."/>
            <person name="Nielsen M.L."/>
        </authorList>
    </citation>
    <scope>SUMOYLATION [LARGE SCALE ANALYSIS] AT LYS-181; LYS-182 AND LYS-532</scope>
    <scope>IDENTIFICATION BY MASS SPECTROMETRY [LARGE SCALE ANALYSIS]</scope>
</reference>
<reference key="9">
    <citation type="journal article" date="2006" name="Science">
        <title>The consensus coding sequences of human breast and colorectal cancers.</title>
        <authorList>
            <person name="Sjoeblom T."/>
            <person name="Jones S."/>
            <person name="Wood L.D."/>
            <person name="Parsons D.W."/>
            <person name="Lin J."/>
            <person name="Barber T.D."/>
            <person name="Mandelker D."/>
            <person name="Leary R.J."/>
            <person name="Ptak J."/>
            <person name="Silliman N."/>
            <person name="Szabo S."/>
            <person name="Buckhaults P."/>
            <person name="Farrell C."/>
            <person name="Meeh P."/>
            <person name="Markowitz S.D."/>
            <person name="Willis J."/>
            <person name="Dawson D."/>
            <person name="Willson J.K.V."/>
            <person name="Gazdar A.F."/>
            <person name="Hartigan J."/>
            <person name="Wu L."/>
            <person name="Liu C."/>
            <person name="Parmigiani G."/>
            <person name="Park B.H."/>
            <person name="Bachman K.E."/>
            <person name="Papadopoulos N."/>
            <person name="Vogelstein B."/>
            <person name="Kinzler K.W."/>
            <person name="Velculescu V.E."/>
        </authorList>
    </citation>
    <scope>VARIANTS [LARGE SCALE ANALYSIS] LEU-424 AND PHE-455</scope>
</reference>
<name>ZBTB3_HUMAN</name>
<gene>
    <name type="primary">ZBTB3</name>
</gene>
<accession>Q9H5J0</accession>
<organism>
    <name type="scientific">Homo sapiens</name>
    <name type="common">Human</name>
    <dbReference type="NCBI Taxonomy" id="9606"/>
    <lineage>
        <taxon>Eukaryota</taxon>
        <taxon>Metazoa</taxon>
        <taxon>Chordata</taxon>
        <taxon>Craniata</taxon>
        <taxon>Vertebrata</taxon>
        <taxon>Euteleostomi</taxon>
        <taxon>Mammalia</taxon>
        <taxon>Eutheria</taxon>
        <taxon>Euarchontoglires</taxon>
        <taxon>Primates</taxon>
        <taxon>Haplorrhini</taxon>
        <taxon>Catarrhini</taxon>
        <taxon>Hominidae</taxon>
        <taxon>Homo</taxon>
    </lineage>
</organism>
<keyword id="KW-0238">DNA-binding</keyword>
<keyword id="KW-1017">Isopeptide bond</keyword>
<keyword id="KW-0479">Metal-binding</keyword>
<keyword id="KW-0539">Nucleus</keyword>
<keyword id="KW-0597">Phosphoprotein</keyword>
<keyword id="KW-1267">Proteomics identification</keyword>
<keyword id="KW-1185">Reference proteome</keyword>
<keyword id="KW-0677">Repeat</keyword>
<keyword id="KW-0804">Transcription</keyword>
<keyword id="KW-0805">Transcription regulation</keyword>
<keyword id="KW-0832">Ubl conjugation</keyword>
<keyword id="KW-0862">Zinc</keyword>
<keyword id="KW-0863">Zinc-finger</keyword>
<dbReference type="EMBL" id="AK027045">
    <property type="protein sequence ID" value="BAB15636.1"/>
    <property type="molecule type" value="mRNA"/>
</dbReference>
<dbReference type="EMBL" id="BC025249">
    <property type="protein sequence ID" value="AAH25249.1"/>
    <property type="molecule type" value="mRNA"/>
</dbReference>
<dbReference type="RefSeq" id="NP_079060.1">
    <property type="nucleotide sequence ID" value="NM_024784.3"/>
</dbReference>
<dbReference type="SMR" id="Q9H5J0"/>
<dbReference type="BioGRID" id="122933">
    <property type="interactions" value="60"/>
</dbReference>
<dbReference type="FunCoup" id="Q9H5J0">
    <property type="interactions" value="1461"/>
</dbReference>
<dbReference type="IntAct" id="Q9H5J0">
    <property type="interactions" value="52"/>
</dbReference>
<dbReference type="MINT" id="Q9H5J0"/>
<dbReference type="STRING" id="9606.ENSP00000501025"/>
<dbReference type="iPTMnet" id="Q9H5J0"/>
<dbReference type="PhosphoSitePlus" id="Q9H5J0"/>
<dbReference type="BioMuta" id="ZBTB3"/>
<dbReference type="DMDM" id="33517138"/>
<dbReference type="jPOST" id="Q9H5J0"/>
<dbReference type="MassIVE" id="Q9H5J0"/>
<dbReference type="PaxDb" id="9606-ENSP00000378286"/>
<dbReference type="PeptideAtlas" id="Q9H5J0"/>
<dbReference type="ProteomicsDB" id="80914"/>
<dbReference type="Pumba" id="Q9H5J0"/>
<dbReference type="Antibodypedia" id="14959">
    <property type="antibodies" value="148 antibodies from 21 providers"/>
</dbReference>
<dbReference type="DNASU" id="79842"/>
<dbReference type="Ensembl" id="ENST00000673933.1">
    <property type="protein sequence ID" value="ENSP00000501025.1"/>
    <property type="gene ID" value="ENSG00000185670.9"/>
</dbReference>
<dbReference type="UCSC" id="uc001nuz.4">
    <property type="organism name" value="human"/>
</dbReference>
<dbReference type="AGR" id="HGNC:22918"/>
<dbReference type="GeneCards" id="ZBTB3"/>
<dbReference type="HGNC" id="HGNC:22918">
    <property type="gene designation" value="ZBTB3"/>
</dbReference>
<dbReference type="HPA" id="ENSG00000185670">
    <property type="expression patterns" value="Low tissue specificity"/>
</dbReference>
<dbReference type="neXtProt" id="NX_Q9H5J0"/>
<dbReference type="OpenTargets" id="ENSG00000185670"/>
<dbReference type="PharmGKB" id="PA134950004"/>
<dbReference type="VEuPathDB" id="HostDB:ENSG00000185670"/>
<dbReference type="eggNOG" id="KOG1721">
    <property type="taxonomic scope" value="Eukaryota"/>
</dbReference>
<dbReference type="GeneTree" id="ENSGT00940000161486"/>
<dbReference type="HOGENOM" id="CLU_034521_0_0_1"/>
<dbReference type="InParanoid" id="Q9H5J0"/>
<dbReference type="OrthoDB" id="6077919at2759"/>
<dbReference type="PAN-GO" id="Q9H5J0">
    <property type="GO annotations" value="4 GO annotations based on evolutionary models"/>
</dbReference>
<dbReference type="PhylomeDB" id="Q9H5J0"/>
<dbReference type="TreeFam" id="TF330979"/>
<dbReference type="PathwayCommons" id="Q9H5J0"/>
<dbReference type="SignaLink" id="Q9H5J0"/>
<dbReference type="BioGRID-ORCS" id="79842">
    <property type="hits" value="17 hits in 1215 CRISPR screens"/>
</dbReference>
<dbReference type="GenomeRNAi" id="79842"/>
<dbReference type="Pharos" id="Q9H5J0">
    <property type="development level" value="Tdark"/>
</dbReference>
<dbReference type="PRO" id="PR:Q9H5J0"/>
<dbReference type="Proteomes" id="UP000005640">
    <property type="component" value="Chromosome 11"/>
</dbReference>
<dbReference type="RNAct" id="Q9H5J0">
    <property type="molecule type" value="protein"/>
</dbReference>
<dbReference type="Bgee" id="ENSG00000185670">
    <property type="expression patterns" value="Expressed in endothelial cell and 138 other cell types or tissues"/>
</dbReference>
<dbReference type="ExpressionAtlas" id="Q9H5J0">
    <property type="expression patterns" value="baseline and differential"/>
</dbReference>
<dbReference type="GO" id="GO:0005634">
    <property type="term" value="C:nucleus"/>
    <property type="evidence" value="ECO:0000318"/>
    <property type="project" value="GO_Central"/>
</dbReference>
<dbReference type="GO" id="GO:0003677">
    <property type="term" value="F:DNA binding"/>
    <property type="evidence" value="ECO:0007669"/>
    <property type="project" value="UniProtKB-KW"/>
</dbReference>
<dbReference type="GO" id="GO:0000981">
    <property type="term" value="F:DNA-binding transcription factor activity, RNA polymerase II-specific"/>
    <property type="evidence" value="ECO:0000318"/>
    <property type="project" value="GO_Central"/>
</dbReference>
<dbReference type="GO" id="GO:0008270">
    <property type="term" value="F:zinc ion binding"/>
    <property type="evidence" value="ECO:0007669"/>
    <property type="project" value="UniProtKB-KW"/>
</dbReference>
<dbReference type="GO" id="GO:0006357">
    <property type="term" value="P:regulation of transcription by RNA polymerase II"/>
    <property type="evidence" value="ECO:0000318"/>
    <property type="project" value="GO_Central"/>
</dbReference>
<dbReference type="CDD" id="cd18323">
    <property type="entry name" value="BTB_POZ_ZBTB3"/>
    <property type="match status" value="1"/>
</dbReference>
<dbReference type="FunFam" id="3.30.160.60:FF:000114">
    <property type="entry name" value="Zinc finger and BTB domain-containing protein 18"/>
    <property type="match status" value="1"/>
</dbReference>
<dbReference type="FunFam" id="3.30.710.10:FF:000021">
    <property type="entry name" value="Zinc finger and BTB domain-containing protein 18"/>
    <property type="match status" value="1"/>
</dbReference>
<dbReference type="FunFam" id="3.30.160.60:FF:000892">
    <property type="entry name" value="zinc finger and BTB domain-containing protein 3"/>
    <property type="match status" value="1"/>
</dbReference>
<dbReference type="Gene3D" id="3.30.160.60">
    <property type="entry name" value="Classic Zinc Finger"/>
    <property type="match status" value="2"/>
</dbReference>
<dbReference type="Gene3D" id="3.30.710.10">
    <property type="entry name" value="Potassium Channel Kv1.1, Chain A"/>
    <property type="match status" value="1"/>
</dbReference>
<dbReference type="InterPro" id="IPR000210">
    <property type="entry name" value="BTB/POZ_dom"/>
</dbReference>
<dbReference type="InterPro" id="IPR011333">
    <property type="entry name" value="SKP1/BTB/POZ_sf"/>
</dbReference>
<dbReference type="InterPro" id="IPR036236">
    <property type="entry name" value="Znf_C2H2_sf"/>
</dbReference>
<dbReference type="InterPro" id="IPR013087">
    <property type="entry name" value="Znf_C2H2_type"/>
</dbReference>
<dbReference type="InterPro" id="IPR050457">
    <property type="entry name" value="ZnFinger_BTB_dom_contain"/>
</dbReference>
<dbReference type="PANTHER" id="PTHR46105">
    <property type="entry name" value="AGAP004733-PA"/>
    <property type="match status" value="1"/>
</dbReference>
<dbReference type="PANTHER" id="PTHR46105:SF5">
    <property type="entry name" value="ZINC FINGER AND BTB DOMAIN-CONTAINING PROTEIN 44 ISOFORM X1"/>
    <property type="match status" value="1"/>
</dbReference>
<dbReference type="Pfam" id="PF00651">
    <property type="entry name" value="BTB"/>
    <property type="match status" value="1"/>
</dbReference>
<dbReference type="Pfam" id="PF00096">
    <property type="entry name" value="zf-C2H2"/>
    <property type="match status" value="1"/>
</dbReference>
<dbReference type="SMART" id="SM00225">
    <property type="entry name" value="BTB"/>
    <property type="match status" value="1"/>
</dbReference>
<dbReference type="SMART" id="SM00355">
    <property type="entry name" value="ZnF_C2H2"/>
    <property type="match status" value="2"/>
</dbReference>
<dbReference type="SUPFAM" id="SSF57667">
    <property type="entry name" value="beta-beta-alpha zinc fingers"/>
    <property type="match status" value="1"/>
</dbReference>
<dbReference type="SUPFAM" id="SSF54695">
    <property type="entry name" value="POZ domain"/>
    <property type="match status" value="1"/>
</dbReference>
<dbReference type="PROSITE" id="PS50097">
    <property type="entry name" value="BTB"/>
    <property type="match status" value="1"/>
</dbReference>
<dbReference type="PROSITE" id="PS00028">
    <property type="entry name" value="ZINC_FINGER_C2H2_1"/>
    <property type="match status" value="2"/>
</dbReference>
<dbReference type="PROSITE" id="PS50157">
    <property type="entry name" value="ZINC_FINGER_C2H2_2"/>
    <property type="match status" value="2"/>
</dbReference>